<organism>
    <name type="scientific">Burkholderia pseudomallei (strain K96243)</name>
    <dbReference type="NCBI Taxonomy" id="272560"/>
    <lineage>
        <taxon>Bacteria</taxon>
        <taxon>Pseudomonadati</taxon>
        <taxon>Pseudomonadota</taxon>
        <taxon>Betaproteobacteria</taxon>
        <taxon>Burkholderiales</taxon>
        <taxon>Burkholderiaceae</taxon>
        <taxon>Burkholderia</taxon>
        <taxon>pseudomallei group</taxon>
    </lineage>
</organism>
<comment type="function">
    <text evidence="1">Catalyzes the formation of 6,7-dimethyl-8-ribityllumazine by condensation of 5-amino-6-(D-ribitylamino)uracil with 3,4-dihydroxy-2-butanone 4-phosphate. This is the penultimate step in the biosynthesis of riboflavin.</text>
</comment>
<comment type="catalytic activity">
    <reaction evidence="1">
        <text>(2S)-2-hydroxy-3-oxobutyl phosphate + 5-amino-6-(D-ribitylamino)uracil = 6,7-dimethyl-8-(1-D-ribityl)lumazine + phosphate + 2 H2O + H(+)</text>
        <dbReference type="Rhea" id="RHEA:26152"/>
        <dbReference type="ChEBI" id="CHEBI:15377"/>
        <dbReference type="ChEBI" id="CHEBI:15378"/>
        <dbReference type="ChEBI" id="CHEBI:15934"/>
        <dbReference type="ChEBI" id="CHEBI:43474"/>
        <dbReference type="ChEBI" id="CHEBI:58201"/>
        <dbReference type="ChEBI" id="CHEBI:58830"/>
        <dbReference type="EC" id="2.5.1.78"/>
    </reaction>
</comment>
<comment type="pathway">
    <text evidence="1">Cofactor biosynthesis; riboflavin biosynthesis; riboflavin from 2-hydroxy-3-oxobutyl phosphate and 5-amino-6-(D-ribitylamino)uracil: step 1/2.</text>
</comment>
<comment type="similarity">
    <text evidence="1">Belongs to the DMRL synthase family.</text>
</comment>
<sequence>MEIGQYQPNLEGDGLRIGIVQSRFNEPVCNGLADACVEELERLGVSGEDVLLVTVPGALEIPLALQKLAESNQFDALIALGAVIRGETYHFELVSNESGAGITRIALDFNTPIANAVLTTETDEQAIARMTEKGRDAARVAVEMANLTMTLDQLSDDEEDEEDEDDEDEEERA</sequence>
<proteinExistence type="inferred from homology"/>
<feature type="chain" id="PRO_1000040385" description="6,7-dimethyl-8-ribityllumazine synthase">
    <location>
        <begin position="1"/>
        <end position="173"/>
    </location>
</feature>
<feature type="region of interest" description="Disordered" evidence="2">
    <location>
        <begin position="150"/>
        <end position="173"/>
    </location>
</feature>
<feature type="compositionally biased region" description="Acidic residues" evidence="2">
    <location>
        <begin position="154"/>
        <end position="173"/>
    </location>
</feature>
<feature type="active site" description="Proton donor" evidence="1">
    <location>
        <position position="90"/>
    </location>
</feature>
<feature type="binding site" evidence="1">
    <location>
        <position position="24"/>
    </location>
    <ligand>
        <name>5-amino-6-(D-ribitylamino)uracil</name>
        <dbReference type="ChEBI" id="CHEBI:15934"/>
    </ligand>
</feature>
<feature type="binding site" evidence="1">
    <location>
        <begin position="58"/>
        <end position="60"/>
    </location>
    <ligand>
        <name>5-amino-6-(D-ribitylamino)uracil</name>
        <dbReference type="ChEBI" id="CHEBI:15934"/>
    </ligand>
</feature>
<feature type="binding site" evidence="1">
    <location>
        <begin position="82"/>
        <end position="84"/>
    </location>
    <ligand>
        <name>5-amino-6-(D-ribitylamino)uracil</name>
        <dbReference type="ChEBI" id="CHEBI:15934"/>
    </ligand>
</feature>
<feature type="binding site" evidence="1">
    <location>
        <begin position="87"/>
        <end position="88"/>
    </location>
    <ligand>
        <name>(2S)-2-hydroxy-3-oxobutyl phosphate</name>
        <dbReference type="ChEBI" id="CHEBI:58830"/>
    </ligand>
</feature>
<feature type="binding site" evidence="1">
    <location>
        <position position="115"/>
    </location>
    <ligand>
        <name>5-amino-6-(D-ribitylamino)uracil</name>
        <dbReference type="ChEBI" id="CHEBI:15934"/>
    </ligand>
</feature>
<feature type="binding site" evidence="1">
    <location>
        <position position="129"/>
    </location>
    <ligand>
        <name>(2S)-2-hydroxy-3-oxobutyl phosphate</name>
        <dbReference type="ChEBI" id="CHEBI:58830"/>
    </ligand>
</feature>
<name>RISB_BURPS</name>
<dbReference type="EC" id="2.5.1.78" evidence="1"/>
<dbReference type="EMBL" id="BX571965">
    <property type="protein sequence ID" value="CAH36635.1"/>
    <property type="molecule type" value="Genomic_DNA"/>
</dbReference>
<dbReference type="RefSeq" id="WP_004186056.1">
    <property type="nucleotide sequence ID" value="NZ_CP009538.1"/>
</dbReference>
<dbReference type="RefSeq" id="YP_109223.1">
    <property type="nucleotide sequence ID" value="NC_006350.1"/>
</dbReference>
<dbReference type="SMR" id="Q63RP5"/>
<dbReference type="STRING" id="272560.BPSL2627"/>
<dbReference type="GeneID" id="93061204"/>
<dbReference type="KEGG" id="bps:BPSL2627"/>
<dbReference type="PATRIC" id="fig|272560.51.peg.2725"/>
<dbReference type="eggNOG" id="COG0054">
    <property type="taxonomic scope" value="Bacteria"/>
</dbReference>
<dbReference type="UniPathway" id="UPA00275">
    <property type="reaction ID" value="UER00404"/>
</dbReference>
<dbReference type="Proteomes" id="UP000000605">
    <property type="component" value="Chromosome 1"/>
</dbReference>
<dbReference type="GO" id="GO:0005829">
    <property type="term" value="C:cytosol"/>
    <property type="evidence" value="ECO:0007669"/>
    <property type="project" value="TreeGrafter"/>
</dbReference>
<dbReference type="GO" id="GO:0009349">
    <property type="term" value="C:riboflavin synthase complex"/>
    <property type="evidence" value="ECO:0007669"/>
    <property type="project" value="InterPro"/>
</dbReference>
<dbReference type="GO" id="GO:0000906">
    <property type="term" value="F:6,7-dimethyl-8-ribityllumazine synthase activity"/>
    <property type="evidence" value="ECO:0007669"/>
    <property type="project" value="UniProtKB-UniRule"/>
</dbReference>
<dbReference type="GO" id="GO:0009231">
    <property type="term" value="P:riboflavin biosynthetic process"/>
    <property type="evidence" value="ECO:0007669"/>
    <property type="project" value="UniProtKB-UniRule"/>
</dbReference>
<dbReference type="CDD" id="cd09209">
    <property type="entry name" value="Lumazine_synthase-I"/>
    <property type="match status" value="1"/>
</dbReference>
<dbReference type="Gene3D" id="3.40.50.960">
    <property type="entry name" value="Lumazine/riboflavin synthase"/>
    <property type="match status" value="1"/>
</dbReference>
<dbReference type="HAMAP" id="MF_00178">
    <property type="entry name" value="Lumazine_synth"/>
    <property type="match status" value="1"/>
</dbReference>
<dbReference type="InterPro" id="IPR034964">
    <property type="entry name" value="LS"/>
</dbReference>
<dbReference type="InterPro" id="IPR002180">
    <property type="entry name" value="LS/RS"/>
</dbReference>
<dbReference type="InterPro" id="IPR036467">
    <property type="entry name" value="LS/RS_sf"/>
</dbReference>
<dbReference type="NCBIfam" id="TIGR00114">
    <property type="entry name" value="lumazine-synth"/>
    <property type="match status" value="1"/>
</dbReference>
<dbReference type="PANTHER" id="PTHR21058:SF0">
    <property type="entry name" value="6,7-DIMETHYL-8-RIBITYLLUMAZINE SYNTHASE"/>
    <property type="match status" value="1"/>
</dbReference>
<dbReference type="PANTHER" id="PTHR21058">
    <property type="entry name" value="6,7-DIMETHYL-8-RIBITYLLUMAZINE SYNTHASE DMRL SYNTHASE LUMAZINE SYNTHASE"/>
    <property type="match status" value="1"/>
</dbReference>
<dbReference type="Pfam" id="PF00885">
    <property type="entry name" value="DMRL_synthase"/>
    <property type="match status" value="1"/>
</dbReference>
<dbReference type="SUPFAM" id="SSF52121">
    <property type="entry name" value="Lumazine synthase"/>
    <property type="match status" value="1"/>
</dbReference>
<protein>
    <recommendedName>
        <fullName evidence="1">6,7-dimethyl-8-ribityllumazine synthase</fullName>
        <shortName evidence="1">DMRL synthase</shortName>
        <shortName evidence="1">LS</shortName>
        <shortName evidence="1">Lumazine synthase</shortName>
        <ecNumber evidence="1">2.5.1.78</ecNumber>
    </recommendedName>
</protein>
<keyword id="KW-1185">Reference proteome</keyword>
<keyword id="KW-0686">Riboflavin biosynthesis</keyword>
<keyword id="KW-0808">Transferase</keyword>
<evidence type="ECO:0000255" key="1">
    <source>
        <dbReference type="HAMAP-Rule" id="MF_00178"/>
    </source>
</evidence>
<evidence type="ECO:0000256" key="2">
    <source>
        <dbReference type="SAM" id="MobiDB-lite"/>
    </source>
</evidence>
<gene>
    <name evidence="1" type="primary">ribH</name>
    <name type="ordered locus">BPSL2627</name>
</gene>
<reference key="1">
    <citation type="journal article" date="2004" name="Proc. Natl. Acad. Sci. U.S.A.">
        <title>Genomic plasticity of the causative agent of melioidosis, Burkholderia pseudomallei.</title>
        <authorList>
            <person name="Holden M.T.G."/>
            <person name="Titball R.W."/>
            <person name="Peacock S.J."/>
            <person name="Cerdeno-Tarraga A.-M."/>
            <person name="Atkins T."/>
            <person name="Crossman L.C."/>
            <person name="Pitt T."/>
            <person name="Churcher C."/>
            <person name="Mungall K.L."/>
            <person name="Bentley S.D."/>
            <person name="Sebaihia M."/>
            <person name="Thomson N.R."/>
            <person name="Bason N."/>
            <person name="Beacham I.R."/>
            <person name="Brooks K."/>
            <person name="Brown K.A."/>
            <person name="Brown N.F."/>
            <person name="Challis G.L."/>
            <person name="Cherevach I."/>
            <person name="Chillingworth T."/>
            <person name="Cronin A."/>
            <person name="Crossett B."/>
            <person name="Davis P."/>
            <person name="DeShazer D."/>
            <person name="Feltwell T."/>
            <person name="Fraser A."/>
            <person name="Hance Z."/>
            <person name="Hauser H."/>
            <person name="Holroyd S."/>
            <person name="Jagels K."/>
            <person name="Keith K.E."/>
            <person name="Maddison M."/>
            <person name="Moule S."/>
            <person name="Price C."/>
            <person name="Quail M.A."/>
            <person name="Rabbinowitsch E."/>
            <person name="Rutherford K."/>
            <person name="Sanders M."/>
            <person name="Simmonds M."/>
            <person name="Songsivilai S."/>
            <person name="Stevens K."/>
            <person name="Tumapa S."/>
            <person name="Vesaratchavest M."/>
            <person name="Whitehead S."/>
            <person name="Yeats C."/>
            <person name="Barrell B.G."/>
            <person name="Oyston P.C.F."/>
            <person name="Parkhill J."/>
        </authorList>
    </citation>
    <scope>NUCLEOTIDE SEQUENCE [LARGE SCALE GENOMIC DNA]</scope>
    <source>
        <strain>K96243</strain>
    </source>
</reference>
<accession>Q63RP5</accession>